<organism>
    <name type="scientific">Yersinia enterocolitica serotype O:8 / biotype 1B (strain NCTC 13174 / 8081)</name>
    <dbReference type="NCBI Taxonomy" id="393305"/>
    <lineage>
        <taxon>Bacteria</taxon>
        <taxon>Pseudomonadati</taxon>
        <taxon>Pseudomonadota</taxon>
        <taxon>Gammaproteobacteria</taxon>
        <taxon>Enterobacterales</taxon>
        <taxon>Yersiniaceae</taxon>
        <taxon>Yersinia</taxon>
    </lineage>
</organism>
<accession>A1JT67</accession>
<proteinExistence type="inferred from homology"/>
<name>Y4162_YERE8</name>
<reference key="1">
    <citation type="journal article" date="2006" name="PLoS Genet.">
        <title>The complete genome sequence and comparative genome analysis of the high pathogenicity Yersinia enterocolitica strain 8081.</title>
        <authorList>
            <person name="Thomson N.R."/>
            <person name="Howard S."/>
            <person name="Wren B.W."/>
            <person name="Holden M.T.G."/>
            <person name="Crossman L."/>
            <person name="Challis G.L."/>
            <person name="Churcher C."/>
            <person name="Mungall K."/>
            <person name="Brooks K."/>
            <person name="Chillingworth T."/>
            <person name="Feltwell T."/>
            <person name="Abdellah Z."/>
            <person name="Hauser H."/>
            <person name="Jagels K."/>
            <person name="Maddison M."/>
            <person name="Moule S."/>
            <person name="Sanders M."/>
            <person name="Whitehead S."/>
            <person name="Quail M.A."/>
            <person name="Dougan G."/>
            <person name="Parkhill J."/>
            <person name="Prentice M.B."/>
        </authorList>
    </citation>
    <scope>NUCLEOTIDE SEQUENCE [LARGE SCALE GENOMIC DNA]</scope>
    <source>
        <strain>NCTC 13174 / 8081</strain>
    </source>
</reference>
<dbReference type="EMBL" id="AM286415">
    <property type="protein sequence ID" value="CAL14178.1"/>
    <property type="molecule type" value="Genomic_DNA"/>
</dbReference>
<dbReference type="RefSeq" id="WP_005175115.1">
    <property type="nucleotide sequence ID" value="NC_008800.1"/>
</dbReference>
<dbReference type="RefSeq" id="YP_001008296.1">
    <property type="nucleotide sequence ID" value="NC_008800.1"/>
</dbReference>
<dbReference type="SMR" id="A1JT67"/>
<dbReference type="KEGG" id="yen:YE4162"/>
<dbReference type="PATRIC" id="fig|393305.7.peg.4430"/>
<dbReference type="eggNOG" id="COG0569">
    <property type="taxonomic scope" value="Bacteria"/>
</dbReference>
<dbReference type="eggNOG" id="COG2985">
    <property type="taxonomic scope" value="Bacteria"/>
</dbReference>
<dbReference type="HOGENOM" id="CLU_035023_3_1_6"/>
<dbReference type="OrthoDB" id="5166626at2"/>
<dbReference type="Proteomes" id="UP000000642">
    <property type="component" value="Chromosome"/>
</dbReference>
<dbReference type="GO" id="GO:0005886">
    <property type="term" value="C:plasma membrane"/>
    <property type="evidence" value="ECO:0007669"/>
    <property type="project" value="UniProtKB-SubCell"/>
</dbReference>
<dbReference type="GO" id="GO:0008324">
    <property type="term" value="F:monoatomic cation transmembrane transporter activity"/>
    <property type="evidence" value="ECO:0007669"/>
    <property type="project" value="InterPro"/>
</dbReference>
<dbReference type="GO" id="GO:0006813">
    <property type="term" value="P:potassium ion transport"/>
    <property type="evidence" value="ECO:0007669"/>
    <property type="project" value="InterPro"/>
</dbReference>
<dbReference type="Gene3D" id="3.30.70.1450">
    <property type="entry name" value="Regulator of K+ conductance, C-terminal domain"/>
    <property type="match status" value="2"/>
</dbReference>
<dbReference type="HAMAP" id="MF_01016">
    <property type="entry name" value="YidE"/>
    <property type="match status" value="1"/>
</dbReference>
<dbReference type="InterPro" id="IPR050144">
    <property type="entry name" value="AAE_transporter"/>
</dbReference>
<dbReference type="InterPro" id="IPR006037">
    <property type="entry name" value="RCK_C"/>
</dbReference>
<dbReference type="InterPro" id="IPR036721">
    <property type="entry name" value="RCK_C_sf"/>
</dbReference>
<dbReference type="InterPro" id="IPR023018">
    <property type="entry name" value="Transpt_YidE_put"/>
</dbReference>
<dbReference type="InterPro" id="IPR006512">
    <property type="entry name" value="YidE_YbjL"/>
</dbReference>
<dbReference type="NCBIfam" id="NF003007">
    <property type="entry name" value="PRK03818.1"/>
    <property type="match status" value="1"/>
</dbReference>
<dbReference type="NCBIfam" id="TIGR01625">
    <property type="entry name" value="YidE_YbjL_dupl"/>
    <property type="match status" value="2"/>
</dbReference>
<dbReference type="PANTHER" id="PTHR30445">
    <property type="entry name" value="K(+)_H(+) ANTIPORTER SUBUNIT KHTT"/>
    <property type="match status" value="1"/>
</dbReference>
<dbReference type="PANTHER" id="PTHR30445:SF3">
    <property type="entry name" value="TRANSPORT PROTEIN YIDE-RELATED"/>
    <property type="match status" value="1"/>
</dbReference>
<dbReference type="Pfam" id="PF06826">
    <property type="entry name" value="Asp-Al_Ex"/>
    <property type="match status" value="2"/>
</dbReference>
<dbReference type="Pfam" id="PF02080">
    <property type="entry name" value="TrkA_C"/>
    <property type="match status" value="1"/>
</dbReference>
<dbReference type="SUPFAM" id="SSF116726">
    <property type="entry name" value="TrkA C-terminal domain-like"/>
    <property type="match status" value="2"/>
</dbReference>
<dbReference type="PROSITE" id="PS51202">
    <property type="entry name" value="RCK_C"/>
    <property type="match status" value="2"/>
</dbReference>
<gene>
    <name type="ordered locus">YE4162</name>
</gene>
<evidence type="ECO:0000255" key="1">
    <source>
        <dbReference type="HAMAP-Rule" id="MF_01016"/>
    </source>
</evidence>
<sequence>MSAIALTVSMLALVAVLGLWIGNWKVYGVGLGIGGVLFGGIIVGHFAQTYELVLNGDMLHFIQEFGLILFVYTIGIQVGPGFFSSLRVSGLRLNCFAILMVIVGGLVTAIIHKLFAVPLPIILGVFSGAVTNTPALGAAQQILTDLGSPPQLVSQMGMGYAMAYPFGICGILLVMWLIRLFFKINVDREAKEFDSSHGQNRELLQTMNVAVRNPNLHGLSMQDVPLLNSDEVVCSRLKRGDLLMVPLSGTVIELGDYLHLVGQREALEKVRLVVGEEVDVTLSTASTVLQTARVVVTNEAVLGKKIRDLNLKQKYDVAITRLNRAGIELVASNNASLQFGDILNLVGRPESIEAVSAVVGNAQQKLQQVQMLPVFIGVGLGVLLGSIPLFIPGFPAALRLGLAGGPLVVALILGRIGSIGKLYWFMPPSANLALRELGIVLFLSVVGLKSGGDFINTLVNGDGLAWIGYGAMITGIPLLTVGILARMLAKMNYLTLCGMLAGSMTDPPALAFANGLHPTSGAAALSYATVYPLAMFLRIMSPQILAVLFWTL</sequence>
<feature type="chain" id="PRO_1000063257" description="Putative transport protein YE4162">
    <location>
        <begin position="1"/>
        <end position="552"/>
    </location>
</feature>
<feature type="transmembrane region" description="Helical" evidence="1">
    <location>
        <begin position="1"/>
        <end position="21"/>
    </location>
</feature>
<feature type="transmembrane region" description="Helical" evidence="1">
    <location>
        <begin position="26"/>
        <end position="46"/>
    </location>
</feature>
<feature type="transmembrane region" description="Helical" evidence="1">
    <location>
        <begin position="65"/>
        <end position="85"/>
    </location>
</feature>
<feature type="transmembrane region" description="Helical" evidence="1">
    <location>
        <begin position="96"/>
        <end position="116"/>
    </location>
</feature>
<feature type="transmembrane region" description="Helical" evidence="1">
    <location>
        <begin position="119"/>
        <end position="139"/>
    </location>
</feature>
<feature type="transmembrane region" description="Helical" evidence="1">
    <location>
        <begin position="158"/>
        <end position="178"/>
    </location>
</feature>
<feature type="transmembrane region" description="Helical" evidence="1">
    <location>
        <begin position="371"/>
        <end position="391"/>
    </location>
</feature>
<feature type="transmembrane region" description="Helical" evidence="1">
    <location>
        <begin position="393"/>
        <end position="413"/>
    </location>
</feature>
<feature type="transmembrane region" description="Helical" evidence="1">
    <location>
        <begin position="439"/>
        <end position="459"/>
    </location>
</feature>
<feature type="transmembrane region" description="Helical" evidence="1">
    <location>
        <begin position="464"/>
        <end position="484"/>
    </location>
</feature>
<feature type="transmembrane region" description="Helical" evidence="1">
    <location>
        <begin position="493"/>
        <end position="513"/>
    </location>
</feature>
<feature type="transmembrane region" description="Helical" evidence="1">
    <location>
        <begin position="530"/>
        <end position="550"/>
    </location>
</feature>
<feature type="domain" description="RCK C-terminal 1" evidence="1">
    <location>
        <begin position="192"/>
        <end position="276"/>
    </location>
</feature>
<feature type="domain" description="RCK C-terminal 2" evidence="1">
    <location>
        <begin position="279"/>
        <end position="361"/>
    </location>
</feature>
<comment type="subcellular location">
    <subcellularLocation>
        <location evidence="1">Cell membrane</location>
        <topology evidence="1">Multi-pass membrane protein</topology>
    </subcellularLocation>
</comment>
<comment type="similarity">
    <text evidence="1">Belongs to the AAE transporter (TC 2.A.81) family. YidE subfamily.</text>
</comment>
<protein>
    <recommendedName>
        <fullName evidence="1">Putative transport protein YE4162</fullName>
    </recommendedName>
</protein>
<keyword id="KW-1003">Cell membrane</keyword>
<keyword id="KW-0472">Membrane</keyword>
<keyword id="KW-0677">Repeat</keyword>
<keyword id="KW-0812">Transmembrane</keyword>
<keyword id="KW-1133">Transmembrane helix</keyword>
<keyword id="KW-0813">Transport</keyword>